<proteinExistence type="inferred from homology"/>
<sequence length="379" mass="41775">MNLTRDPTGAEIARFIATRTGAQMVELMRCISEPAAQAAFTANLLAAPPVVDARPAASERARKALNAFVRFRCYYVAIPMFKQWPMKKLSNLIGLLWEADPNKSLWSLMTKAWSTIRDQIGKEQAPLDQFFSIICPHLRLPDPALYLEIHGWTLTVDQEGDPTISRSLNSRSSSIGTGNIDIALSVEDIIAYVQSFGYAASFTPTTNVSSPTFLGQSTNLPLENNNPTTAATQAASKIAQARLLARNKRRAKRQTAKETGYRVNLDQDILNAHQISPPPMNRYMPDPYSTFAPTPNHSPNPFYDGLTGFLSEQASIEQVNAATLHNTHSLSDSGLSGDMSYMTMDNFATNMPNLIDYDAFRLGANEDVTLPLFDDIAHA</sequence>
<organism>
    <name type="scientific">Curvularia kusanoi</name>
    <name type="common">Cochliobolus kusanoi</name>
    <dbReference type="NCBI Taxonomy" id="90978"/>
    <lineage>
        <taxon>Eukaryota</taxon>
        <taxon>Fungi</taxon>
        <taxon>Dikarya</taxon>
        <taxon>Ascomycota</taxon>
        <taxon>Pezizomycotina</taxon>
        <taxon>Dothideomycetes</taxon>
        <taxon>Pleosporomycetidae</taxon>
        <taxon>Pleosporales</taxon>
        <taxon>Pleosporineae</taxon>
        <taxon>Pleosporaceae</taxon>
        <taxon>Curvularia</taxon>
    </lineage>
</organism>
<comment type="function">
    <text evidence="1">Mating type proteins are sequence specific DNA-binding proteins that act as master switches in fungal differentiation by controlling gene expression in a cell type-specific fashion. Transcriptional activator that induces the transcription of alpha-specific genes.</text>
</comment>
<comment type="subcellular location">
    <subcellularLocation>
        <location evidence="2">Nucleus</location>
    </subcellularLocation>
</comment>
<comment type="similarity">
    <text evidence="2">Belongs to the MATALPHA1 family.</text>
</comment>
<feature type="chain" id="PRO_0000206013" description="Mating-type protein MAT-1">
    <location>
        <begin position="1"/>
        <end position="379"/>
    </location>
</feature>
<feature type="DNA-binding region" description="Alpha box" evidence="2">
    <location>
        <begin position="60"/>
        <end position="117"/>
    </location>
</feature>
<name>MAT1_CURKU</name>
<accession>Q9Y8D3</accession>
<evidence type="ECO:0000250" key="1">
    <source>
        <dbReference type="UniProtKB" id="P0CY06"/>
    </source>
</evidence>
<evidence type="ECO:0000255" key="2">
    <source>
        <dbReference type="PROSITE-ProRule" id="PRU00655"/>
    </source>
</evidence>
<reference key="1">
    <citation type="journal article" date="1999" name="Proc. Natl. Acad. Sci. U.S.A.">
        <title>Evolution of the fungal self-fertile reproductive life style from self-sterile ancestors.</title>
        <authorList>
            <person name="Yun S.H."/>
            <person name="Berbee M.L."/>
            <person name="Yoder O.C."/>
            <person name="Turgeon B.G."/>
        </authorList>
    </citation>
    <scope>NUCLEOTIDE SEQUENCE [GENOMIC DNA]</scope>
    <source>
        <strain>CK2</strain>
    </source>
</reference>
<dbReference type="EMBL" id="AF129742">
    <property type="protein sequence ID" value="AAD33443.1"/>
    <property type="molecule type" value="Genomic_DNA"/>
</dbReference>
<dbReference type="GO" id="GO:0005634">
    <property type="term" value="C:nucleus"/>
    <property type="evidence" value="ECO:0007669"/>
    <property type="project" value="UniProtKB-SubCell"/>
</dbReference>
<dbReference type="GO" id="GO:0008301">
    <property type="term" value="F:DNA binding, bending"/>
    <property type="evidence" value="ECO:0007669"/>
    <property type="project" value="InterPro"/>
</dbReference>
<dbReference type="GO" id="GO:0045895">
    <property type="term" value="P:positive regulation of mating-type specific transcription, DNA-templated"/>
    <property type="evidence" value="ECO:0007669"/>
    <property type="project" value="InterPro"/>
</dbReference>
<dbReference type="GO" id="GO:0007338">
    <property type="term" value="P:single fertilization"/>
    <property type="evidence" value="ECO:0007669"/>
    <property type="project" value="UniProtKB-KW"/>
</dbReference>
<dbReference type="InterPro" id="IPR006856">
    <property type="entry name" value="MATalpha_HMGbox"/>
</dbReference>
<dbReference type="Pfam" id="PF04769">
    <property type="entry name" value="MATalpha_HMGbox"/>
    <property type="match status" value="1"/>
</dbReference>
<dbReference type="PROSITE" id="PS51325">
    <property type="entry name" value="ALPHA_BOX"/>
    <property type="match status" value="1"/>
</dbReference>
<keyword id="KW-0238">DNA-binding</keyword>
<keyword id="KW-0278">Fertilization</keyword>
<keyword id="KW-0539">Nucleus</keyword>
<keyword id="KW-0804">Transcription</keyword>
<keyword id="KW-0805">Transcription regulation</keyword>
<protein>
    <recommendedName>
        <fullName>Mating-type protein MAT-1</fullName>
    </recommendedName>
</protein>
<gene>
    <name type="primary">MAT1</name>
</gene>